<accession>Q2KVT3</accession>
<name>TAL_BORA1</name>
<comment type="function">
    <text evidence="2">Transaldolase is important for the balance of metabolites in the pentose-phosphate pathway.</text>
</comment>
<comment type="catalytic activity">
    <reaction evidence="2">
        <text>D-sedoheptulose 7-phosphate + D-glyceraldehyde 3-phosphate = D-erythrose 4-phosphate + beta-D-fructose 6-phosphate</text>
        <dbReference type="Rhea" id="RHEA:17053"/>
        <dbReference type="ChEBI" id="CHEBI:16897"/>
        <dbReference type="ChEBI" id="CHEBI:57483"/>
        <dbReference type="ChEBI" id="CHEBI:57634"/>
        <dbReference type="ChEBI" id="CHEBI:59776"/>
        <dbReference type="EC" id="2.2.1.2"/>
    </reaction>
</comment>
<comment type="pathway">
    <text evidence="2">Carbohydrate degradation; pentose phosphate pathway; D-glyceraldehyde 3-phosphate and beta-D-fructose 6-phosphate from D-ribose 5-phosphate and D-xylulose 5-phosphate (non-oxidative stage): step 2/3.</text>
</comment>
<comment type="subunit">
    <text evidence="1">Homodimer.</text>
</comment>
<comment type="subcellular location">
    <subcellularLocation>
        <location evidence="2">Cytoplasm</location>
    </subcellularLocation>
</comment>
<comment type="similarity">
    <text evidence="2">Belongs to the transaldolase family. Type 1 subfamily.</text>
</comment>
<protein>
    <recommendedName>
        <fullName evidence="2">Transaldolase</fullName>
        <ecNumber evidence="2">2.2.1.2</ecNumber>
    </recommendedName>
</protein>
<evidence type="ECO:0000250" key="1"/>
<evidence type="ECO:0000255" key="2">
    <source>
        <dbReference type="HAMAP-Rule" id="MF_00492"/>
    </source>
</evidence>
<dbReference type="EC" id="2.2.1.2" evidence="2"/>
<dbReference type="EMBL" id="AM167904">
    <property type="protein sequence ID" value="CAJ48531.1"/>
    <property type="molecule type" value="Genomic_DNA"/>
</dbReference>
<dbReference type="RefSeq" id="WP_012416610.1">
    <property type="nucleotide sequence ID" value="NC_010645.1"/>
</dbReference>
<dbReference type="SMR" id="Q2KVT3"/>
<dbReference type="STRING" id="360910.BAV0920"/>
<dbReference type="GeneID" id="92935887"/>
<dbReference type="KEGG" id="bav:BAV0920"/>
<dbReference type="eggNOG" id="COG0176">
    <property type="taxonomic scope" value="Bacteria"/>
</dbReference>
<dbReference type="HOGENOM" id="CLU_047470_0_1_4"/>
<dbReference type="OrthoDB" id="9809101at2"/>
<dbReference type="UniPathway" id="UPA00115">
    <property type="reaction ID" value="UER00414"/>
</dbReference>
<dbReference type="Proteomes" id="UP000001977">
    <property type="component" value="Chromosome"/>
</dbReference>
<dbReference type="GO" id="GO:0005737">
    <property type="term" value="C:cytoplasm"/>
    <property type="evidence" value="ECO:0007669"/>
    <property type="project" value="UniProtKB-SubCell"/>
</dbReference>
<dbReference type="GO" id="GO:0004801">
    <property type="term" value="F:transaldolase activity"/>
    <property type="evidence" value="ECO:0000250"/>
    <property type="project" value="UniProtKB"/>
</dbReference>
<dbReference type="GO" id="GO:0005975">
    <property type="term" value="P:carbohydrate metabolic process"/>
    <property type="evidence" value="ECO:0007669"/>
    <property type="project" value="InterPro"/>
</dbReference>
<dbReference type="GO" id="GO:0006098">
    <property type="term" value="P:pentose-phosphate shunt"/>
    <property type="evidence" value="ECO:0007669"/>
    <property type="project" value="UniProtKB-UniRule"/>
</dbReference>
<dbReference type="CDD" id="cd00957">
    <property type="entry name" value="Transaldolase_TalAB"/>
    <property type="match status" value="1"/>
</dbReference>
<dbReference type="FunFam" id="3.20.20.70:FF:000131">
    <property type="entry name" value="Transaldolase"/>
    <property type="match status" value="1"/>
</dbReference>
<dbReference type="Gene3D" id="3.20.20.70">
    <property type="entry name" value="Aldolase class I"/>
    <property type="match status" value="1"/>
</dbReference>
<dbReference type="HAMAP" id="MF_00492">
    <property type="entry name" value="Transaldolase_1"/>
    <property type="match status" value="1"/>
</dbReference>
<dbReference type="InterPro" id="IPR013785">
    <property type="entry name" value="Aldolase_TIM"/>
</dbReference>
<dbReference type="InterPro" id="IPR001585">
    <property type="entry name" value="TAL/FSA"/>
</dbReference>
<dbReference type="InterPro" id="IPR004730">
    <property type="entry name" value="Transaldolase_1"/>
</dbReference>
<dbReference type="InterPro" id="IPR018225">
    <property type="entry name" value="Transaldolase_AS"/>
</dbReference>
<dbReference type="NCBIfam" id="TIGR00874">
    <property type="entry name" value="talAB"/>
    <property type="match status" value="1"/>
</dbReference>
<dbReference type="PANTHER" id="PTHR10683">
    <property type="entry name" value="TRANSALDOLASE"/>
    <property type="match status" value="1"/>
</dbReference>
<dbReference type="PANTHER" id="PTHR10683:SF18">
    <property type="entry name" value="TRANSALDOLASE"/>
    <property type="match status" value="1"/>
</dbReference>
<dbReference type="Pfam" id="PF00923">
    <property type="entry name" value="TAL_FSA"/>
    <property type="match status" value="1"/>
</dbReference>
<dbReference type="SUPFAM" id="SSF51569">
    <property type="entry name" value="Aldolase"/>
    <property type="match status" value="1"/>
</dbReference>
<dbReference type="PROSITE" id="PS01054">
    <property type="entry name" value="TRANSALDOLASE_1"/>
    <property type="match status" value="1"/>
</dbReference>
<dbReference type="PROSITE" id="PS00958">
    <property type="entry name" value="TRANSALDOLASE_2"/>
    <property type="match status" value="1"/>
</dbReference>
<feature type="chain" id="PRO_1000014485" description="Transaldolase">
    <location>
        <begin position="1"/>
        <end position="319"/>
    </location>
</feature>
<feature type="active site" description="Schiff-base intermediate with substrate" evidence="2">
    <location>
        <position position="126"/>
    </location>
</feature>
<keyword id="KW-0963">Cytoplasm</keyword>
<keyword id="KW-0570">Pentose shunt</keyword>
<keyword id="KW-1185">Reference proteome</keyword>
<keyword id="KW-0704">Schiff base</keyword>
<keyword id="KW-0808">Transferase</keyword>
<gene>
    <name evidence="2" type="primary">tal</name>
    <name type="ordered locus">BAV0920</name>
</gene>
<organism>
    <name type="scientific">Bordetella avium (strain 197N)</name>
    <dbReference type="NCBI Taxonomy" id="360910"/>
    <lineage>
        <taxon>Bacteria</taxon>
        <taxon>Pseudomonadati</taxon>
        <taxon>Pseudomonadota</taxon>
        <taxon>Betaproteobacteria</taxon>
        <taxon>Burkholderiales</taxon>
        <taxon>Alcaligenaceae</taxon>
        <taxon>Bordetella</taxon>
    </lineage>
</organism>
<proteinExistence type="inferred from homology"/>
<sequence>MPSQLEALRRHTTVVADTGDFETMRALRPTDATTNPSLILKAVQQAAYRPLLDQVARDHRGAPLAEITDRLLVAFGRQILDIVPGRVSTEVDARLSFDTRATIERARSLIALYEAAGVARERVLIKIASTWEGIQAARLLQQEGIRCNLTLLFSLVQAAACAEAGVQLISPFVGRIYDWHKKAAGAQWNEAQQSGVNDPGVQSVARIFAYYKAYGVATEVMGASFRNTGQILALAGCDLLTISPELLARLDATEGEVPLSLSEPLPGAALPKALPSGEIAFRSLLNEDAMASEKLAEGIRLFVGDAQRLDDLLRAAGAY</sequence>
<reference key="1">
    <citation type="journal article" date="2006" name="J. Bacteriol.">
        <title>Comparison of the genome sequence of the poultry pathogen Bordetella avium with those of B. bronchiseptica, B. pertussis, and B. parapertussis reveals extensive diversity in surface structures associated with host interaction.</title>
        <authorList>
            <person name="Sebaihia M."/>
            <person name="Preston A."/>
            <person name="Maskell D.J."/>
            <person name="Kuzmiak H."/>
            <person name="Connell T.D."/>
            <person name="King N.D."/>
            <person name="Orndorff P.E."/>
            <person name="Miyamoto D.M."/>
            <person name="Thomson N.R."/>
            <person name="Harris D."/>
            <person name="Goble A."/>
            <person name="Lord A."/>
            <person name="Murphy L."/>
            <person name="Quail M.A."/>
            <person name="Rutter S."/>
            <person name="Squares R."/>
            <person name="Squares S."/>
            <person name="Woodward J."/>
            <person name="Parkhill J."/>
            <person name="Temple L.M."/>
        </authorList>
    </citation>
    <scope>NUCLEOTIDE SEQUENCE [LARGE SCALE GENOMIC DNA]</scope>
    <source>
        <strain>197N</strain>
    </source>
</reference>